<dbReference type="EMBL" id="AF237814">
    <property type="protein sequence ID" value="AAF40221.1"/>
    <property type="molecule type" value="mRNA"/>
</dbReference>
<dbReference type="EMBL" id="AK009690">
    <property type="protein sequence ID" value="BAB26441.1"/>
    <property type="molecule type" value="mRNA"/>
</dbReference>
<dbReference type="EMBL" id="AK019106">
    <property type="protein sequence ID" value="BAB31549.1"/>
    <property type="molecule type" value="mRNA"/>
</dbReference>
<dbReference type="EMBL" id="AK031673">
    <property type="protein sequence ID" value="BAC27505.1"/>
    <property type="molecule type" value="mRNA"/>
</dbReference>
<dbReference type="EMBL" id="AK044905">
    <property type="protein sequence ID" value="BAC32135.1"/>
    <property type="molecule type" value="mRNA"/>
</dbReference>
<dbReference type="EMBL" id="AK049124">
    <property type="protein sequence ID" value="BAC33556.1"/>
    <property type="molecule type" value="mRNA"/>
</dbReference>
<dbReference type="EMBL" id="BC029205">
    <property type="protein sequence ID" value="AAH29205.1"/>
    <property type="molecule type" value="mRNA"/>
</dbReference>
<dbReference type="CCDS" id="CCDS35741.1">
    <molecule id="Q9JKK1-1"/>
</dbReference>
<dbReference type="RefSeq" id="NP_067408.1">
    <molecule id="Q9JKK1-1"/>
    <property type="nucleotide sequence ID" value="NM_021433.3"/>
</dbReference>
<dbReference type="SMR" id="Q9JKK1"/>
<dbReference type="BioGRID" id="208415">
    <property type="interactions" value="12"/>
</dbReference>
<dbReference type="CORUM" id="Q9JKK1"/>
<dbReference type="FunCoup" id="Q9JKK1">
    <property type="interactions" value="3575"/>
</dbReference>
<dbReference type="IntAct" id="Q9JKK1">
    <property type="interactions" value="4"/>
</dbReference>
<dbReference type="MINT" id="Q9JKK1"/>
<dbReference type="STRING" id="10090.ENSMUSP00000027743"/>
<dbReference type="iPTMnet" id="Q9JKK1"/>
<dbReference type="PhosphoSitePlus" id="Q9JKK1"/>
<dbReference type="SwissPalm" id="Q9JKK1"/>
<dbReference type="jPOST" id="Q9JKK1"/>
<dbReference type="PaxDb" id="10090-ENSMUSP00000027743"/>
<dbReference type="ProteomicsDB" id="258769">
    <molecule id="Q9JKK1-1"/>
</dbReference>
<dbReference type="ProteomicsDB" id="258770">
    <molecule id="Q9JKK1-2"/>
</dbReference>
<dbReference type="Pumba" id="Q9JKK1"/>
<dbReference type="Antibodypedia" id="34430">
    <property type="antibodies" value="308 antibodies from 37 providers"/>
</dbReference>
<dbReference type="DNASU" id="58244"/>
<dbReference type="Ensembl" id="ENSMUST00000027743.13">
    <molecule id="Q9JKK1-1"/>
    <property type="protein sequence ID" value="ENSMUSP00000027743.8"/>
    <property type="gene ID" value="ENSMUSG00000026470.15"/>
</dbReference>
<dbReference type="Ensembl" id="ENSMUST00000195302.6">
    <molecule id="Q9JKK1-2"/>
    <property type="protein sequence ID" value="ENSMUSP00000142089.2"/>
    <property type="gene ID" value="ENSMUSG00000026470.15"/>
</dbReference>
<dbReference type="GeneID" id="58244"/>
<dbReference type="KEGG" id="mmu:58244"/>
<dbReference type="UCSC" id="uc007dbb.1">
    <molecule id="Q9JKK1-1"/>
    <property type="organism name" value="mouse"/>
</dbReference>
<dbReference type="UCSC" id="uc007dbc.1">
    <molecule id="Q9JKK1-2"/>
    <property type="organism name" value="mouse"/>
</dbReference>
<dbReference type="AGR" id="MGI:1926235"/>
<dbReference type="CTD" id="10228"/>
<dbReference type="MGI" id="MGI:1926235">
    <property type="gene designation" value="Stx6"/>
</dbReference>
<dbReference type="VEuPathDB" id="HostDB:ENSMUSG00000026470"/>
<dbReference type="eggNOG" id="KOG3202">
    <property type="taxonomic scope" value="Eukaryota"/>
</dbReference>
<dbReference type="GeneTree" id="ENSGT00940000157639"/>
<dbReference type="HOGENOM" id="CLU_061883_1_0_1"/>
<dbReference type="InParanoid" id="Q9JKK1"/>
<dbReference type="OMA" id="EHDPYRF"/>
<dbReference type="OrthoDB" id="546861at2759"/>
<dbReference type="PhylomeDB" id="Q9JKK1"/>
<dbReference type="TreeFam" id="TF313254"/>
<dbReference type="Reactome" id="R-MMU-6811438">
    <property type="pathway name" value="Intra-Golgi traffic"/>
</dbReference>
<dbReference type="Reactome" id="R-MMU-6811440">
    <property type="pathway name" value="Retrograde transport at the Trans-Golgi-Network"/>
</dbReference>
<dbReference type="BioGRID-ORCS" id="58244">
    <property type="hits" value="4 hits in 79 CRISPR screens"/>
</dbReference>
<dbReference type="CD-CODE" id="CE726F99">
    <property type="entry name" value="Postsynaptic density"/>
</dbReference>
<dbReference type="ChiTaRS" id="Stx6">
    <property type="organism name" value="mouse"/>
</dbReference>
<dbReference type="PRO" id="PR:Q9JKK1"/>
<dbReference type="Proteomes" id="UP000000589">
    <property type="component" value="Chromosome 1"/>
</dbReference>
<dbReference type="RNAct" id="Q9JKK1">
    <property type="molecule type" value="protein"/>
</dbReference>
<dbReference type="Bgee" id="ENSMUSG00000026470">
    <property type="expression patterns" value="Expressed in external carotid artery and 254 other cell types or tissues"/>
</dbReference>
<dbReference type="ExpressionAtlas" id="Q9JKK1">
    <property type="expression patterns" value="baseline and differential"/>
</dbReference>
<dbReference type="GO" id="GO:0005829">
    <property type="term" value="C:cytosol"/>
    <property type="evidence" value="ECO:0007669"/>
    <property type="project" value="Ensembl"/>
</dbReference>
<dbReference type="GO" id="GO:0005769">
    <property type="term" value="C:early endosome"/>
    <property type="evidence" value="ECO:0007669"/>
    <property type="project" value="Ensembl"/>
</dbReference>
<dbReference type="GO" id="GO:0005794">
    <property type="term" value="C:Golgi apparatus"/>
    <property type="evidence" value="ECO:0000314"/>
    <property type="project" value="MGI"/>
</dbReference>
<dbReference type="GO" id="GO:0000139">
    <property type="term" value="C:Golgi membrane"/>
    <property type="evidence" value="ECO:0007669"/>
    <property type="project" value="UniProtKB-SubCell"/>
</dbReference>
<dbReference type="GO" id="GO:0016020">
    <property type="term" value="C:membrane"/>
    <property type="evidence" value="ECO:0000314"/>
    <property type="project" value="MGI"/>
</dbReference>
<dbReference type="GO" id="GO:0005654">
    <property type="term" value="C:nucleoplasm"/>
    <property type="evidence" value="ECO:0007669"/>
    <property type="project" value="Ensembl"/>
</dbReference>
<dbReference type="GO" id="GO:0048471">
    <property type="term" value="C:perinuclear region of cytoplasm"/>
    <property type="evidence" value="ECO:0007669"/>
    <property type="project" value="Ensembl"/>
</dbReference>
<dbReference type="GO" id="GO:0045335">
    <property type="term" value="C:phagocytic vesicle"/>
    <property type="evidence" value="ECO:0000315"/>
    <property type="project" value="AgBase"/>
</dbReference>
<dbReference type="GO" id="GO:0055037">
    <property type="term" value="C:recycling endosome"/>
    <property type="evidence" value="ECO:0000250"/>
    <property type="project" value="UniProtKB"/>
</dbReference>
<dbReference type="GO" id="GO:0055038">
    <property type="term" value="C:recycling endosome membrane"/>
    <property type="evidence" value="ECO:0007669"/>
    <property type="project" value="UniProtKB-SubCell"/>
</dbReference>
<dbReference type="GO" id="GO:0031201">
    <property type="term" value="C:SNARE complex"/>
    <property type="evidence" value="ECO:0000266"/>
    <property type="project" value="MGI"/>
</dbReference>
<dbReference type="GO" id="GO:0005802">
    <property type="term" value="C:trans-Golgi network"/>
    <property type="evidence" value="ECO:0000314"/>
    <property type="project" value="MGI"/>
</dbReference>
<dbReference type="GO" id="GO:0032588">
    <property type="term" value="C:trans-Golgi network membrane"/>
    <property type="evidence" value="ECO:0000314"/>
    <property type="project" value="MGI"/>
</dbReference>
<dbReference type="GO" id="GO:0005484">
    <property type="term" value="F:SNAP receptor activity"/>
    <property type="evidence" value="ECO:0007669"/>
    <property type="project" value="InterPro"/>
</dbReference>
<dbReference type="GO" id="GO:0019905">
    <property type="term" value="F:syntaxin binding"/>
    <property type="evidence" value="ECO:0007669"/>
    <property type="project" value="Ensembl"/>
</dbReference>
<dbReference type="GO" id="GO:0032456">
    <property type="term" value="P:endocytic recycling"/>
    <property type="evidence" value="ECO:0000250"/>
    <property type="project" value="UniProtKB"/>
</dbReference>
<dbReference type="GO" id="GO:0007032">
    <property type="term" value="P:endosome organization"/>
    <property type="evidence" value="ECO:0000315"/>
    <property type="project" value="MGI"/>
</dbReference>
<dbReference type="GO" id="GO:0048193">
    <property type="term" value="P:Golgi vesicle transport"/>
    <property type="evidence" value="ECO:0007669"/>
    <property type="project" value="InterPro"/>
</dbReference>
<dbReference type="GO" id="GO:0006886">
    <property type="term" value="P:intracellular protein transport"/>
    <property type="evidence" value="ECO:0007669"/>
    <property type="project" value="InterPro"/>
</dbReference>
<dbReference type="GO" id="GO:0032880">
    <property type="term" value="P:regulation of protein localization"/>
    <property type="evidence" value="ECO:0000315"/>
    <property type="project" value="AgBase"/>
</dbReference>
<dbReference type="GO" id="GO:0042147">
    <property type="term" value="P:retrograde transport, endosome to Golgi"/>
    <property type="evidence" value="ECO:0000250"/>
    <property type="project" value="UniProtKB"/>
</dbReference>
<dbReference type="GO" id="GO:0006906">
    <property type="term" value="P:vesicle fusion"/>
    <property type="evidence" value="ECO:0007669"/>
    <property type="project" value="Ensembl"/>
</dbReference>
<dbReference type="CDD" id="cd21447">
    <property type="entry name" value="SNARE_NTD_STX6"/>
    <property type="match status" value="1"/>
</dbReference>
<dbReference type="CDD" id="cd15851">
    <property type="entry name" value="SNARE_Syntaxin6"/>
    <property type="match status" value="1"/>
</dbReference>
<dbReference type="FunFam" id="1.20.5.110:FF:000006">
    <property type="entry name" value="Syntaxin 6"/>
    <property type="match status" value="1"/>
</dbReference>
<dbReference type="FunFam" id="1.20.58.90:FF:000002">
    <property type="entry name" value="syntaxin-6 isoform X1"/>
    <property type="match status" value="1"/>
</dbReference>
<dbReference type="Gene3D" id="1.20.5.110">
    <property type="match status" value="1"/>
</dbReference>
<dbReference type="Gene3D" id="1.20.58.90">
    <property type="match status" value="1"/>
</dbReference>
<dbReference type="InterPro" id="IPR010989">
    <property type="entry name" value="SNARE"/>
</dbReference>
<dbReference type="InterPro" id="IPR015260">
    <property type="entry name" value="Syntaxin-6/10/61_N"/>
</dbReference>
<dbReference type="InterPro" id="IPR006012">
    <property type="entry name" value="Syntaxin/epimorphin_CS"/>
</dbReference>
<dbReference type="InterPro" id="IPR000727">
    <property type="entry name" value="T_SNARE_dom"/>
</dbReference>
<dbReference type="PANTHER" id="PTHR12791">
    <property type="entry name" value="GOLGI SNARE BET1-RELATED"/>
    <property type="match status" value="1"/>
</dbReference>
<dbReference type="Pfam" id="PF05739">
    <property type="entry name" value="SNARE"/>
    <property type="match status" value="1"/>
</dbReference>
<dbReference type="Pfam" id="PF09177">
    <property type="entry name" value="STX6_10_61_N"/>
    <property type="match status" value="1"/>
</dbReference>
<dbReference type="SMART" id="SM00397">
    <property type="entry name" value="t_SNARE"/>
    <property type="match status" value="1"/>
</dbReference>
<dbReference type="SUPFAM" id="SSF58038">
    <property type="entry name" value="SNARE fusion complex"/>
    <property type="match status" value="1"/>
</dbReference>
<dbReference type="SUPFAM" id="SSF47661">
    <property type="entry name" value="t-snare proteins"/>
    <property type="match status" value="1"/>
</dbReference>
<dbReference type="PROSITE" id="PS00914">
    <property type="entry name" value="SYNTAXIN"/>
    <property type="match status" value="1"/>
</dbReference>
<dbReference type="PROSITE" id="PS50192">
    <property type="entry name" value="T_SNARE"/>
    <property type="match status" value="1"/>
</dbReference>
<keyword id="KW-0007">Acetylation</keyword>
<keyword id="KW-0025">Alternative splicing</keyword>
<keyword id="KW-0175">Coiled coil</keyword>
<keyword id="KW-0967">Endosome</keyword>
<keyword id="KW-0333">Golgi apparatus</keyword>
<keyword id="KW-0472">Membrane</keyword>
<keyword id="KW-0597">Phosphoprotein</keyword>
<keyword id="KW-0653">Protein transport</keyword>
<keyword id="KW-1185">Reference proteome</keyword>
<keyword id="KW-0812">Transmembrane</keyword>
<keyword id="KW-1133">Transmembrane helix</keyword>
<keyword id="KW-0813">Transport</keyword>
<organism>
    <name type="scientific">Mus musculus</name>
    <name type="common">Mouse</name>
    <dbReference type="NCBI Taxonomy" id="10090"/>
    <lineage>
        <taxon>Eukaryota</taxon>
        <taxon>Metazoa</taxon>
        <taxon>Chordata</taxon>
        <taxon>Craniata</taxon>
        <taxon>Vertebrata</taxon>
        <taxon>Euteleostomi</taxon>
        <taxon>Mammalia</taxon>
        <taxon>Eutheria</taxon>
        <taxon>Euarchontoglires</taxon>
        <taxon>Glires</taxon>
        <taxon>Rodentia</taxon>
        <taxon>Myomorpha</taxon>
        <taxon>Muroidea</taxon>
        <taxon>Muridae</taxon>
        <taxon>Murinae</taxon>
        <taxon>Mus</taxon>
        <taxon>Mus</taxon>
    </lineage>
</organism>
<comment type="function">
    <text evidence="2">SNARE promoting movement of transport vesicles to target membranes. Targets endosomes to the trans-Golgi network, and may therefore function in retrograde trafficking. Together with SNARE STX12, promotes movement of vesicles from endosomes to the cell membrane, and may therefore function in the endocytic recycling pathway.</text>
</comment>
<comment type="subunit">
    <text evidence="1 2 5 6">Identified in a complex containing STX6, STX12 and VAMP4 (By similarity). This complex also includes VTI1A (PubMed:9705316). Binds EEA1 (By similarity). Interacts with VPS45A and GOPC (By similarity). Interacts with MARCHF2; the interaction promotes MARCHF2-mediated ubiquitination and degradation of CFTR (By similarity). Interacts with MARCHF3 (By similarity). Interacts with BLTP3B (via C-terminal coiled-coil domain) (PubMed:35499567). Interacts with BAIAP3; this interaction is increased in the presence of calcium (By similarity). Interacts with VPS13B (By similarity).</text>
</comment>
<comment type="subcellular location">
    <subcellularLocation>
        <location evidence="1">Golgi apparatus membrane</location>
        <topology evidence="8">Single-pass type IV membrane protein</topology>
    </subcellularLocation>
    <subcellularLocation>
        <location evidence="2">Golgi apparatus</location>
        <location evidence="2">trans-Golgi network membrane</location>
        <topology evidence="3">Single-pass type IV membrane protein</topology>
    </subcellularLocation>
    <subcellularLocation>
        <location evidence="2">Recycling endosome membrane</location>
        <topology evidence="3">Single-pass type IV membrane protein</topology>
    </subcellularLocation>
</comment>
<comment type="alternative products">
    <event type="alternative splicing"/>
    <isoform>
        <id>Q9JKK1-1</id>
        <name>1</name>
        <sequence type="displayed"/>
    </isoform>
    <isoform>
        <id>Q9JKK1-2</id>
        <name>2</name>
        <sequence type="described" ref="VSP_016138"/>
    </isoform>
</comment>
<comment type="similarity">
    <text evidence="8">Belongs to the syntaxin family.</text>
</comment>
<gene>
    <name type="primary">Stx6</name>
</gene>
<protein>
    <recommendedName>
        <fullName>Syntaxin-6</fullName>
    </recommendedName>
</protein>
<name>STX6_MOUSE</name>
<evidence type="ECO:0000250" key="1">
    <source>
        <dbReference type="UniProtKB" id="O43752"/>
    </source>
</evidence>
<evidence type="ECO:0000250" key="2">
    <source>
        <dbReference type="UniProtKB" id="Q63635"/>
    </source>
</evidence>
<evidence type="ECO:0000255" key="3"/>
<evidence type="ECO:0000255" key="4">
    <source>
        <dbReference type="PROSITE-ProRule" id="PRU00202"/>
    </source>
</evidence>
<evidence type="ECO:0000269" key="5">
    <source>
    </source>
</evidence>
<evidence type="ECO:0000269" key="6">
    <source>
    </source>
</evidence>
<evidence type="ECO:0000303" key="7">
    <source>
    </source>
</evidence>
<evidence type="ECO:0000305" key="8"/>
<reference key="1">
    <citation type="submission" date="2000-02" db="EMBL/GenBank/DDBJ databases">
        <title>Mouse syntaxin 6.</title>
        <authorList>
            <person name="Low D.Y.H."/>
            <person name="Tang B.L."/>
            <person name="Hong W."/>
        </authorList>
    </citation>
    <scope>NUCLEOTIDE SEQUENCE [MRNA]</scope>
</reference>
<reference key="2">
    <citation type="journal article" date="2005" name="Science">
        <title>The transcriptional landscape of the mammalian genome.</title>
        <authorList>
            <person name="Carninci P."/>
            <person name="Kasukawa T."/>
            <person name="Katayama S."/>
            <person name="Gough J."/>
            <person name="Frith M.C."/>
            <person name="Maeda N."/>
            <person name="Oyama R."/>
            <person name="Ravasi T."/>
            <person name="Lenhard B."/>
            <person name="Wells C."/>
            <person name="Kodzius R."/>
            <person name="Shimokawa K."/>
            <person name="Bajic V.B."/>
            <person name="Brenner S.E."/>
            <person name="Batalov S."/>
            <person name="Forrest A.R."/>
            <person name="Zavolan M."/>
            <person name="Davis M.J."/>
            <person name="Wilming L.G."/>
            <person name="Aidinis V."/>
            <person name="Allen J.E."/>
            <person name="Ambesi-Impiombato A."/>
            <person name="Apweiler R."/>
            <person name="Aturaliya R.N."/>
            <person name="Bailey T.L."/>
            <person name="Bansal M."/>
            <person name="Baxter L."/>
            <person name="Beisel K.W."/>
            <person name="Bersano T."/>
            <person name="Bono H."/>
            <person name="Chalk A.M."/>
            <person name="Chiu K.P."/>
            <person name="Choudhary V."/>
            <person name="Christoffels A."/>
            <person name="Clutterbuck D.R."/>
            <person name="Crowe M.L."/>
            <person name="Dalla E."/>
            <person name="Dalrymple B.P."/>
            <person name="de Bono B."/>
            <person name="Della Gatta G."/>
            <person name="di Bernardo D."/>
            <person name="Down T."/>
            <person name="Engstrom P."/>
            <person name="Fagiolini M."/>
            <person name="Faulkner G."/>
            <person name="Fletcher C.F."/>
            <person name="Fukushima T."/>
            <person name="Furuno M."/>
            <person name="Futaki S."/>
            <person name="Gariboldi M."/>
            <person name="Georgii-Hemming P."/>
            <person name="Gingeras T.R."/>
            <person name="Gojobori T."/>
            <person name="Green R.E."/>
            <person name="Gustincich S."/>
            <person name="Harbers M."/>
            <person name="Hayashi Y."/>
            <person name="Hensch T.K."/>
            <person name="Hirokawa N."/>
            <person name="Hill D."/>
            <person name="Huminiecki L."/>
            <person name="Iacono M."/>
            <person name="Ikeo K."/>
            <person name="Iwama A."/>
            <person name="Ishikawa T."/>
            <person name="Jakt M."/>
            <person name="Kanapin A."/>
            <person name="Katoh M."/>
            <person name="Kawasawa Y."/>
            <person name="Kelso J."/>
            <person name="Kitamura H."/>
            <person name="Kitano H."/>
            <person name="Kollias G."/>
            <person name="Krishnan S.P."/>
            <person name="Kruger A."/>
            <person name="Kummerfeld S.K."/>
            <person name="Kurochkin I.V."/>
            <person name="Lareau L.F."/>
            <person name="Lazarevic D."/>
            <person name="Lipovich L."/>
            <person name="Liu J."/>
            <person name="Liuni S."/>
            <person name="McWilliam S."/>
            <person name="Madan Babu M."/>
            <person name="Madera M."/>
            <person name="Marchionni L."/>
            <person name="Matsuda H."/>
            <person name="Matsuzawa S."/>
            <person name="Miki H."/>
            <person name="Mignone F."/>
            <person name="Miyake S."/>
            <person name="Morris K."/>
            <person name="Mottagui-Tabar S."/>
            <person name="Mulder N."/>
            <person name="Nakano N."/>
            <person name="Nakauchi H."/>
            <person name="Ng P."/>
            <person name="Nilsson R."/>
            <person name="Nishiguchi S."/>
            <person name="Nishikawa S."/>
            <person name="Nori F."/>
            <person name="Ohara O."/>
            <person name="Okazaki Y."/>
            <person name="Orlando V."/>
            <person name="Pang K.C."/>
            <person name="Pavan W.J."/>
            <person name="Pavesi G."/>
            <person name="Pesole G."/>
            <person name="Petrovsky N."/>
            <person name="Piazza S."/>
            <person name="Reed J."/>
            <person name="Reid J.F."/>
            <person name="Ring B.Z."/>
            <person name="Ringwald M."/>
            <person name="Rost B."/>
            <person name="Ruan Y."/>
            <person name="Salzberg S.L."/>
            <person name="Sandelin A."/>
            <person name="Schneider C."/>
            <person name="Schoenbach C."/>
            <person name="Sekiguchi K."/>
            <person name="Semple C.A."/>
            <person name="Seno S."/>
            <person name="Sessa L."/>
            <person name="Sheng Y."/>
            <person name="Shibata Y."/>
            <person name="Shimada H."/>
            <person name="Shimada K."/>
            <person name="Silva D."/>
            <person name="Sinclair B."/>
            <person name="Sperling S."/>
            <person name="Stupka E."/>
            <person name="Sugiura K."/>
            <person name="Sultana R."/>
            <person name="Takenaka Y."/>
            <person name="Taki K."/>
            <person name="Tammoja K."/>
            <person name="Tan S.L."/>
            <person name="Tang S."/>
            <person name="Taylor M.S."/>
            <person name="Tegner J."/>
            <person name="Teichmann S.A."/>
            <person name="Ueda H.R."/>
            <person name="van Nimwegen E."/>
            <person name="Verardo R."/>
            <person name="Wei C.L."/>
            <person name="Yagi K."/>
            <person name="Yamanishi H."/>
            <person name="Zabarovsky E."/>
            <person name="Zhu S."/>
            <person name="Zimmer A."/>
            <person name="Hide W."/>
            <person name="Bult C."/>
            <person name="Grimmond S.M."/>
            <person name="Teasdale R.D."/>
            <person name="Liu E.T."/>
            <person name="Brusic V."/>
            <person name="Quackenbush J."/>
            <person name="Wahlestedt C."/>
            <person name="Mattick J.S."/>
            <person name="Hume D.A."/>
            <person name="Kai C."/>
            <person name="Sasaki D."/>
            <person name="Tomaru Y."/>
            <person name="Fukuda S."/>
            <person name="Kanamori-Katayama M."/>
            <person name="Suzuki M."/>
            <person name="Aoki J."/>
            <person name="Arakawa T."/>
            <person name="Iida J."/>
            <person name="Imamura K."/>
            <person name="Itoh M."/>
            <person name="Kato T."/>
            <person name="Kawaji H."/>
            <person name="Kawagashira N."/>
            <person name="Kawashima T."/>
            <person name="Kojima M."/>
            <person name="Kondo S."/>
            <person name="Konno H."/>
            <person name="Nakano K."/>
            <person name="Ninomiya N."/>
            <person name="Nishio T."/>
            <person name="Okada M."/>
            <person name="Plessy C."/>
            <person name="Shibata K."/>
            <person name="Shiraki T."/>
            <person name="Suzuki S."/>
            <person name="Tagami M."/>
            <person name="Waki K."/>
            <person name="Watahiki A."/>
            <person name="Okamura-Oho Y."/>
            <person name="Suzuki H."/>
            <person name="Kawai J."/>
            <person name="Hayashizaki Y."/>
        </authorList>
    </citation>
    <scope>NUCLEOTIDE SEQUENCE [LARGE SCALE MRNA] (ISOFORMS 1 AND 2)</scope>
    <source>
        <strain>C57BL/6J</strain>
        <tissue>Embryonic stem cell</tissue>
        <tissue>Testis</tissue>
        <tissue>Tongue</tissue>
    </source>
</reference>
<reference key="3">
    <citation type="journal article" date="2004" name="Genome Res.">
        <title>The status, quality, and expansion of the NIH full-length cDNA project: the Mammalian Gene Collection (MGC).</title>
        <authorList>
            <consortium name="The MGC Project Team"/>
        </authorList>
    </citation>
    <scope>NUCLEOTIDE SEQUENCE [LARGE SCALE MRNA] (ISOFORM 1)</scope>
    <source>
        <tissue>Mammary tumor</tissue>
    </source>
</reference>
<reference key="4">
    <citation type="journal article" date="1998" name="J. Biol. Chem.">
        <title>A 29-kilodalton Golgi soluble N-ethylmaleimide-sensitive factor attachment protein receptor (Vti1-rp2) implicated in protein trafficking in the secretory pathway.</title>
        <authorList>
            <person name="Xu Y."/>
            <person name="Wong S.H."/>
            <person name="Tang B.L."/>
            <person name="Subramaniam V.N."/>
            <person name="Zhang T."/>
            <person name="Hong W."/>
        </authorList>
    </citation>
    <scope>IDENTIFICATION IN SNARE COMPLEX WITH VTI1A</scope>
    <scope>SUBCELLULAR LOCATION</scope>
</reference>
<reference key="5">
    <citation type="journal article" date="2010" name="Cell">
        <title>A tissue-specific atlas of mouse protein phosphorylation and expression.</title>
        <authorList>
            <person name="Huttlin E.L."/>
            <person name="Jedrychowski M.P."/>
            <person name="Elias J.E."/>
            <person name="Goswami T."/>
            <person name="Rad R."/>
            <person name="Beausoleil S.A."/>
            <person name="Villen J."/>
            <person name="Haas W."/>
            <person name="Sowa M.E."/>
            <person name="Gygi S.P."/>
        </authorList>
    </citation>
    <scope>IDENTIFICATION BY MASS SPECTROMETRY [LARGE SCALE ANALYSIS]</scope>
    <source>
        <tissue>Brain</tissue>
        <tissue>Brown adipose tissue</tissue>
        <tissue>Heart</tissue>
        <tissue>Kidney</tissue>
        <tissue>Lung</tissue>
        <tissue>Pancreas</tissue>
        <tissue>Spleen</tissue>
        <tissue>Testis</tissue>
    </source>
</reference>
<reference key="6">
    <citation type="journal article" date="2022" name="J. Cell Biol.">
        <title>SHIP164 is a chorein motif lipid transfer protein that controls endosome-Golgi membrane traffic.</title>
        <authorList>
            <person name="Hanna M.G."/>
            <person name="Suen P.H."/>
            <person name="Wu Y."/>
            <person name="Reinisch K.M."/>
            <person name="De Camilli P."/>
        </authorList>
    </citation>
    <scope>INTERACTION WITH BLTP3B</scope>
</reference>
<feature type="initiator methionine" description="Removed" evidence="1">
    <location>
        <position position="1"/>
    </location>
</feature>
<feature type="chain" id="PRO_0000210209" description="Syntaxin-6">
    <location>
        <begin position="2"/>
        <end position="255"/>
    </location>
</feature>
<feature type="topological domain" description="Cytoplasmic" evidence="3">
    <location>
        <begin position="2"/>
        <end position="234"/>
    </location>
</feature>
<feature type="transmembrane region" description="Helical; Anchor for type IV membrane protein" evidence="3">
    <location>
        <begin position="235"/>
        <end position="255"/>
    </location>
</feature>
<feature type="domain" description="t-SNARE coiled-coil homology" evidence="4">
    <location>
        <begin position="163"/>
        <end position="225"/>
    </location>
</feature>
<feature type="region of interest" description="Required for interaction with VPS51" evidence="2">
    <location>
        <begin position="2"/>
        <end position="168"/>
    </location>
</feature>
<feature type="coiled-coil region" evidence="3">
    <location>
        <begin position="41"/>
        <end position="74"/>
    </location>
</feature>
<feature type="modified residue" description="N-acetylserine" evidence="1">
    <location>
        <position position="2"/>
    </location>
</feature>
<feature type="modified residue" description="Phosphoserine" evidence="1">
    <location>
        <position position="2"/>
    </location>
</feature>
<feature type="modified residue" description="Phosphoserine" evidence="1">
    <location>
        <position position="129"/>
    </location>
</feature>
<feature type="modified residue" description="Phosphoserine" evidence="1">
    <location>
        <position position="152"/>
    </location>
</feature>
<feature type="splice variant" id="VSP_016138" description="In isoform 2." evidence="7">
    <original>DRRQWCAIAILFAVLVVVLILFLVL</original>
    <variation>GNDVRQVKIQYLLFIWRLLPGERKT</variation>
    <location>
        <begin position="231"/>
        <end position="255"/>
    </location>
</feature>
<sequence>MSMEDPFFVVKGEVQKAVNTAQGLFQRWTELLQGPSAATREEIDWTTNELRNNLRSIEWDLEDLDETISIVEANPRKFNLDATELSIRKAFITSTRQIVRDMKDQMSASSVQALAERKNRQALLGDSSSQSWNAGVADRYGRLDRELQLANSHFIEEQQAQQQLIVEQQDEQLELVSGSIGVLKNMSQRIGGELEEQAVMLDDFSHELESTQSRLDNVMKKLAKVSHMTSDRRQWCAIAILFAVLVVVLILFLVL</sequence>
<proteinExistence type="evidence at protein level"/>
<accession>Q9JKK1</accession>
<accession>Q9D3A1</accession>
<accession>Q9D729</accession>